<dbReference type="EMBL" id="BX571965">
    <property type="protein sequence ID" value="CAH37218.1"/>
    <property type="molecule type" value="Genomic_DNA"/>
</dbReference>
<dbReference type="RefSeq" id="WP_004185240.1">
    <property type="nucleotide sequence ID" value="NZ_CP009538.1"/>
</dbReference>
<dbReference type="RefSeq" id="YP_109801.1">
    <property type="nucleotide sequence ID" value="NC_006350.1"/>
</dbReference>
<dbReference type="SMR" id="Q63Q17"/>
<dbReference type="STRING" id="272560.BPSL3207"/>
<dbReference type="GeneID" id="93061826"/>
<dbReference type="KEGG" id="bps:BPSL3207"/>
<dbReference type="PATRIC" id="fig|272560.51.peg.2031"/>
<dbReference type="eggNOG" id="COG0092">
    <property type="taxonomic scope" value="Bacteria"/>
</dbReference>
<dbReference type="Proteomes" id="UP000000605">
    <property type="component" value="Chromosome 1"/>
</dbReference>
<dbReference type="GO" id="GO:0022627">
    <property type="term" value="C:cytosolic small ribosomal subunit"/>
    <property type="evidence" value="ECO:0007669"/>
    <property type="project" value="TreeGrafter"/>
</dbReference>
<dbReference type="GO" id="GO:0003729">
    <property type="term" value="F:mRNA binding"/>
    <property type="evidence" value="ECO:0007669"/>
    <property type="project" value="UniProtKB-UniRule"/>
</dbReference>
<dbReference type="GO" id="GO:0019843">
    <property type="term" value="F:rRNA binding"/>
    <property type="evidence" value="ECO:0007669"/>
    <property type="project" value="UniProtKB-UniRule"/>
</dbReference>
<dbReference type="GO" id="GO:0003735">
    <property type="term" value="F:structural constituent of ribosome"/>
    <property type="evidence" value="ECO:0007669"/>
    <property type="project" value="InterPro"/>
</dbReference>
<dbReference type="GO" id="GO:0006412">
    <property type="term" value="P:translation"/>
    <property type="evidence" value="ECO:0007669"/>
    <property type="project" value="UniProtKB-UniRule"/>
</dbReference>
<dbReference type="CDD" id="cd02412">
    <property type="entry name" value="KH-II_30S_S3"/>
    <property type="match status" value="1"/>
</dbReference>
<dbReference type="FunFam" id="3.30.1140.32:FF:000006">
    <property type="entry name" value="30S ribosomal protein S3"/>
    <property type="match status" value="1"/>
</dbReference>
<dbReference type="FunFam" id="3.30.300.20:FF:000001">
    <property type="entry name" value="30S ribosomal protein S3"/>
    <property type="match status" value="1"/>
</dbReference>
<dbReference type="Gene3D" id="3.30.300.20">
    <property type="match status" value="1"/>
</dbReference>
<dbReference type="Gene3D" id="3.30.1140.32">
    <property type="entry name" value="Ribosomal protein S3, C-terminal domain"/>
    <property type="match status" value="1"/>
</dbReference>
<dbReference type="HAMAP" id="MF_01309_B">
    <property type="entry name" value="Ribosomal_uS3_B"/>
    <property type="match status" value="1"/>
</dbReference>
<dbReference type="InterPro" id="IPR004087">
    <property type="entry name" value="KH_dom"/>
</dbReference>
<dbReference type="InterPro" id="IPR015946">
    <property type="entry name" value="KH_dom-like_a/b"/>
</dbReference>
<dbReference type="InterPro" id="IPR004044">
    <property type="entry name" value="KH_dom_type_2"/>
</dbReference>
<dbReference type="InterPro" id="IPR009019">
    <property type="entry name" value="KH_sf_prok-type"/>
</dbReference>
<dbReference type="InterPro" id="IPR036419">
    <property type="entry name" value="Ribosomal_S3_C_sf"/>
</dbReference>
<dbReference type="InterPro" id="IPR005704">
    <property type="entry name" value="Ribosomal_uS3_bac-typ"/>
</dbReference>
<dbReference type="InterPro" id="IPR001351">
    <property type="entry name" value="Ribosomal_uS3_C"/>
</dbReference>
<dbReference type="InterPro" id="IPR018280">
    <property type="entry name" value="Ribosomal_uS3_CS"/>
</dbReference>
<dbReference type="NCBIfam" id="TIGR01009">
    <property type="entry name" value="rpsC_bact"/>
    <property type="match status" value="1"/>
</dbReference>
<dbReference type="PANTHER" id="PTHR11760">
    <property type="entry name" value="30S/40S RIBOSOMAL PROTEIN S3"/>
    <property type="match status" value="1"/>
</dbReference>
<dbReference type="PANTHER" id="PTHR11760:SF19">
    <property type="entry name" value="SMALL RIBOSOMAL SUBUNIT PROTEIN US3C"/>
    <property type="match status" value="1"/>
</dbReference>
<dbReference type="Pfam" id="PF07650">
    <property type="entry name" value="KH_2"/>
    <property type="match status" value="1"/>
</dbReference>
<dbReference type="Pfam" id="PF00189">
    <property type="entry name" value="Ribosomal_S3_C"/>
    <property type="match status" value="1"/>
</dbReference>
<dbReference type="SMART" id="SM00322">
    <property type="entry name" value="KH"/>
    <property type="match status" value="1"/>
</dbReference>
<dbReference type="SUPFAM" id="SSF54814">
    <property type="entry name" value="Prokaryotic type KH domain (KH-domain type II)"/>
    <property type="match status" value="1"/>
</dbReference>
<dbReference type="SUPFAM" id="SSF54821">
    <property type="entry name" value="Ribosomal protein S3 C-terminal domain"/>
    <property type="match status" value="1"/>
</dbReference>
<dbReference type="PROSITE" id="PS50823">
    <property type="entry name" value="KH_TYPE_2"/>
    <property type="match status" value="1"/>
</dbReference>
<dbReference type="PROSITE" id="PS00548">
    <property type="entry name" value="RIBOSOMAL_S3"/>
    <property type="match status" value="1"/>
</dbReference>
<keyword id="KW-1185">Reference proteome</keyword>
<keyword id="KW-0687">Ribonucleoprotein</keyword>
<keyword id="KW-0689">Ribosomal protein</keyword>
<keyword id="KW-0694">RNA-binding</keyword>
<keyword id="KW-0699">rRNA-binding</keyword>
<organism>
    <name type="scientific">Burkholderia pseudomallei (strain K96243)</name>
    <dbReference type="NCBI Taxonomy" id="272560"/>
    <lineage>
        <taxon>Bacteria</taxon>
        <taxon>Pseudomonadati</taxon>
        <taxon>Pseudomonadota</taxon>
        <taxon>Betaproteobacteria</taxon>
        <taxon>Burkholderiales</taxon>
        <taxon>Burkholderiaceae</taxon>
        <taxon>Burkholderia</taxon>
        <taxon>pseudomallei group</taxon>
    </lineage>
</organism>
<comment type="function">
    <text evidence="1">Binds the lower part of the 30S subunit head. Binds mRNA in the 70S ribosome, positioning it for translation.</text>
</comment>
<comment type="subunit">
    <text evidence="1">Part of the 30S ribosomal subunit. Forms a tight complex with proteins S10 and S14.</text>
</comment>
<comment type="similarity">
    <text evidence="1">Belongs to the universal ribosomal protein uS3 family.</text>
</comment>
<sequence>MGQKIHPTGFRLAVSRNWASRWYANNNNFAAMLQEDIGVREYLKKKLKNASVGRVVIERPAKNARITIFSSRPGVVIGKKGEDIELLKTELQRRMGVPVHVNIEEIRKPETDAQLIADSITQQLERRIMFRRAMKRAMQNAMRLGAQGIKIMSAGRLNGIEIARTEWYREGRVPLHTLRADIDYATSEAKTTYGIIGVKVWVYKGDTLGRNDAPVVEEVTEDKRPRRNARPGDRRPRRDGEGGAPGARRGGPRRGAGKPEDGKTGE</sequence>
<proteinExistence type="inferred from homology"/>
<reference key="1">
    <citation type="journal article" date="2004" name="Proc. Natl. Acad. Sci. U.S.A.">
        <title>Genomic plasticity of the causative agent of melioidosis, Burkholderia pseudomallei.</title>
        <authorList>
            <person name="Holden M.T.G."/>
            <person name="Titball R.W."/>
            <person name="Peacock S.J."/>
            <person name="Cerdeno-Tarraga A.-M."/>
            <person name="Atkins T."/>
            <person name="Crossman L.C."/>
            <person name="Pitt T."/>
            <person name="Churcher C."/>
            <person name="Mungall K.L."/>
            <person name="Bentley S.D."/>
            <person name="Sebaihia M."/>
            <person name="Thomson N.R."/>
            <person name="Bason N."/>
            <person name="Beacham I.R."/>
            <person name="Brooks K."/>
            <person name="Brown K.A."/>
            <person name="Brown N.F."/>
            <person name="Challis G.L."/>
            <person name="Cherevach I."/>
            <person name="Chillingworth T."/>
            <person name="Cronin A."/>
            <person name="Crossett B."/>
            <person name="Davis P."/>
            <person name="DeShazer D."/>
            <person name="Feltwell T."/>
            <person name="Fraser A."/>
            <person name="Hance Z."/>
            <person name="Hauser H."/>
            <person name="Holroyd S."/>
            <person name="Jagels K."/>
            <person name="Keith K.E."/>
            <person name="Maddison M."/>
            <person name="Moule S."/>
            <person name="Price C."/>
            <person name="Quail M.A."/>
            <person name="Rabbinowitsch E."/>
            <person name="Rutherford K."/>
            <person name="Sanders M."/>
            <person name="Simmonds M."/>
            <person name="Songsivilai S."/>
            <person name="Stevens K."/>
            <person name="Tumapa S."/>
            <person name="Vesaratchavest M."/>
            <person name="Whitehead S."/>
            <person name="Yeats C."/>
            <person name="Barrell B.G."/>
            <person name="Oyston P.C.F."/>
            <person name="Parkhill J."/>
        </authorList>
    </citation>
    <scope>NUCLEOTIDE SEQUENCE [LARGE SCALE GENOMIC DNA]</scope>
    <source>
        <strain>K96243</strain>
    </source>
</reference>
<evidence type="ECO:0000255" key="1">
    <source>
        <dbReference type="HAMAP-Rule" id="MF_01309"/>
    </source>
</evidence>
<evidence type="ECO:0000256" key="2">
    <source>
        <dbReference type="SAM" id="MobiDB-lite"/>
    </source>
</evidence>
<evidence type="ECO:0000305" key="3"/>
<protein>
    <recommendedName>
        <fullName evidence="1">Small ribosomal subunit protein uS3</fullName>
    </recommendedName>
    <alternativeName>
        <fullName evidence="3">30S ribosomal protein S3</fullName>
    </alternativeName>
</protein>
<gene>
    <name evidence="1" type="primary">rpsC</name>
    <name type="ordered locus">BPSL3207</name>
</gene>
<feature type="chain" id="PRO_0000130092" description="Small ribosomal subunit protein uS3">
    <location>
        <begin position="1"/>
        <end position="266"/>
    </location>
</feature>
<feature type="domain" description="KH type-2" evidence="1">
    <location>
        <begin position="39"/>
        <end position="107"/>
    </location>
</feature>
<feature type="region of interest" description="Disordered" evidence="2">
    <location>
        <begin position="214"/>
        <end position="266"/>
    </location>
</feature>
<feature type="compositionally biased region" description="Basic and acidic residues" evidence="2">
    <location>
        <begin position="230"/>
        <end position="241"/>
    </location>
</feature>
<feature type="compositionally biased region" description="Basic and acidic residues" evidence="2">
    <location>
        <begin position="257"/>
        <end position="266"/>
    </location>
</feature>
<accession>Q63Q17</accession>
<name>RS3_BURPS</name>